<geneLocation type="chloroplast"/>
<dbReference type="EMBL" id="X66698">
    <property type="protein sequence ID" value="CAA47242.1"/>
    <property type="molecule type" value="Genomic_DNA"/>
</dbReference>
<dbReference type="SMR" id="Q08808"/>
<dbReference type="GO" id="GO:0009535">
    <property type="term" value="C:chloroplast thylakoid membrane"/>
    <property type="evidence" value="ECO:0007669"/>
    <property type="project" value="UniProtKB-SubCell"/>
</dbReference>
<dbReference type="GO" id="GO:0045259">
    <property type="term" value="C:proton-transporting ATP synthase complex"/>
    <property type="evidence" value="ECO:0007669"/>
    <property type="project" value="UniProtKB-KW"/>
</dbReference>
<dbReference type="GO" id="GO:0005524">
    <property type="term" value="F:ATP binding"/>
    <property type="evidence" value="ECO:0007669"/>
    <property type="project" value="UniProtKB-UniRule"/>
</dbReference>
<dbReference type="GO" id="GO:0046933">
    <property type="term" value="F:proton-transporting ATP synthase activity, rotational mechanism"/>
    <property type="evidence" value="ECO:0007669"/>
    <property type="project" value="UniProtKB-UniRule"/>
</dbReference>
<dbReference type="CDD" id="cd12152">
    <property type="entry name" value="F1-ATPase_delta"/>
    <property type="match status" value="1"/>
</dbReference>
<dbReference type="Gene3D" id="2.60.15.10">
    <property type="entry name" value="F0F1 ATP synthase delta/epsilon subunit, N-terminal"/>
    <property type="match status" value="1"/>
</dbReference>
<dbReference type="Gene3D" id="1.10.287.540">
    <property type="entry name" value="Helix hairpin bin"/>
    <property type="match status" value="1"/>
</dbReference>
<dbReference type="HAMAP" id="MF_00530">
    <property type="entry name" value="ATP_synth_epsil_bac"/>
    <property type="match status" value="1"/>
</dbReference>
<dbReference type="InterPro" id="IPR001469">
    <property type="entry name" value="ATP_synth_F1_dsu/esu"/>
</dbReference>
<dbReference type="InterPro" id="IPR020546">
    <property type="entry name" value="ATP_synth_F1_dsu/esu_N"/>
</dbReference>
<dbReference type="InterPro" id="IPR036771">
    <property type="entry name" value="ATPsynth_dsu/esu_N"/>
</dbReference>
<dbReference type="NCBIfam" id="TIGR01216">
    <property type="entry name" value="ATP_synt_epsi"/>
    <property type="match status" value="1"/>
</dbReference>
<dbReference type="PANTHER" id="PTHR13822">
    <property type="entry name" value="ATP SYNTHASE DELTA/EPSILON CHAIN"/>
    <property type="match status" value="1"/>
</dbReference>
<dbReference type="PANTHER" id="PTHR13822:SF10">
    <property type="entry name" value="ATP SYNTHASE EPSILON CHAIN, CHLOROPLASTIC"/>
    <property type="match status" value="1"/>
</dbReference>
<dbReference type="Pfam" id="PF02823">
    <property type="entry name" value="ATP-synt_DE_N"/>
    <property type="match status" value="1"/>
</dbReference>
<dbReference type="SUPFAM" id="SSF51344">
    <property type="entry name" value="Epsilon subunit of F1F0-ATP synthase N-terminal domain"/>
    <property type="match status" value="1"/>
</dbReference>
<feature type="chain" id="PRO_0000188265" description="ATP synthase epsilon chain, chloroplastic">
    <location>
        <begin position="1"/>
        <end position="138"/>
    </location>
</feature>
<keyword id="KW-0066">ATP synthesis</keyword>
<keyword id="KW-0139">CF(1)</keyword>
<keyword id="KW-0150">Chloroplast</keyword>
<keyword id="KW-0375">Hydrogen ion transport</keyword>
<keyword id="KW-0406">Ion transport</keyword>
<keyword id="KW-0472">Membrane</keyword>
<keyword id="KW-0934">Plastid</keyword>
<keyword id="KW-0793">Thylakoid</keyword>
<keyword id="KW-0813">Transport</keyword>
<protein>
    <recommendedName>
        <fullName evidence="1">ATP synthase epsilon chain, chloroplastic</fullName>
    </recommendedName>
    <alternativeName>
        <fullName evidence="1">ATP synthase F1 sector epsilon subunit</fullName>
    </alternativeName>
    <alternativeName>
        <fullName evidence="1">F-ATPase epsilon subunit</fullName>
    </alternativeName>
</protein>
<gene>
    <name evidence="1" type="primary">atpE</name>
</gene>
<evidence type="ECO:0000255" key="1">
    <source>
        <dbReference type="HAMAP-Rule" id="MF_00530"/>
    </source>
</evidence>
<proteinExistence type="inferred from homology"/>
<sequence>MGLNIRVIAPDRIVWNAKAEEVILPTSTGQLGILSGHAPLLTALDIGVMRVRITNTWTSIVLFGGFAEVENDEILILVNGAEEASVINLDKANKELIESSSLLNEAKTNKEKFEATQKLRKAKARVQAANTLTNQSIY</sequence>
<accession>Q08808</accession>
<comment type="function">
    <text evidence="1">Produces ATP from ADP in the presence of a proton gradient across the membrane.</text>
</comment>
<comment type="subunit">
    <text evidence="1">F-type ATPases have 2 components, CF(1) - the catalytic core - and CF(0) - the membrane proton channel. CF(1) has five subunits: alpha(3), beta(3), gamma(1), delta(1), epsilon(1). CF(0) has three main subunits: a, b and c.</text>
</comment>
<comment type="subcellular location">
    <subcellularLocation>
        <location evidence="1">Plastid</location>
        <location evidence="1">Chloroplast thylakoid membrane</location>
        <topology evidence="1">Peripheral membrane protein</topology>
    </subcellularLocation>
</comment>
<comment type="similarity">
    <text evidence="1">Belongs to the ATPase epsilon chain family.</text>
</comment>
<reference key="1">
    <citation type="journal article" date="1993" name="Plant Mol. Biol.">
        <title>Organization of plastid-encoded ATPase genes and flanking regions including homologues of infB and tsf in the thermophilic red alga Galdieria sulphuraria.</title>
        <authorList>
            <person name="Kostrzewa M."/>
            <person name="Zetsche K."/>
        </authorList>
    </citation>
    <scope>NUCLEOTIDE SEQUENCE [GENOMIC DNA]</scope>
    <source>
        <strain>14-1-1 / Isolate 107.79/Goettingen</strain>
    </source>
</reference>
<organism>
    <name type="scientific">Galdieria sulphuraria</name>
    <name type="common">Red alga</name>
    <dbReference type="NCBI Taxonomy" id="130081"/>
    <lineage>
        <taxon>Eukaryota</taxon>
        <taxon>Rhodophyta</taxon>
        <taxon>Bangiophyceae</taxon>
        <taxon>Galdieriales</taxon>
        <taxon>Galdieriaceae</taxon>
        <taxon>Galdieria</taxon>
    </lineage>
</organism>
<name>ATPE_GALSU</name>